<proteinExistence type="inferred from homology"/>
<keyword id="KW-0574">Periplasm</keyword>
<keyword id="KW-0732">Signal</keyword>
<gene>
    <name type="ordered locus">Sputw3181_1309</name>
</gene>
<evidence type="ECO:0000255" key="1">
    <source>
        <dbReference type="HAMAP-Rule" id="MF_00780"/>
    </source>
</evidence>
<protein>
    <recommendedName>
        <fullName evidence="1">UPF0312 protein Sputw3181_1309</fullName>
    </recommendedName>
</protein>
<dbReference type="EMBL" id="CP000503">
    <property type="protein sequence ID" value="ABM24152.1"/>
    <property type="molecule type" value="Genomic_DNA"/>
</dbReference>
<dbReference type="RefSeq" id="WP_011788658.1">
    <property type="nucleotide sequence ID" value="NC_008750.1"/>
</dbReference>
<dbReference type="SMR" id="A1RHK7"/>
<dbReference type="KEGG" id="shw:Sputw3181_1309"/>
<dbReference type="HOGENOM" id="CLU_071003_1_2_6"/>
<dbReference type="Proteomes" id="UP000002597">
    <property type="component" value="Chromosome"/>
</dbReference>
<dbReference type="GO" id="GO:0042597">
    <property type="term" value="C:periplasmic space"/>
    <property type="evidence" value="ECO:0007669"/>
    <property type="project" value="UniProtKB-SubCell"/>
</dbReference>
<dbReference type="Gene3D" id="2.40.128.110">
    <property type="entry name" value="Lipid/polyisoprenoid-binding, YceI-like"/>
    <property type="match status" value="1"/>
</dbReference>
<dbReference type="HAMAP" id="MF_00780">
    <property type="entry name" value="UPF0312"/>
    <property type="match status" value="1"/>
</dbReference>
<dbReference type="InterPro" id="IPR007372">
    <property type="entry name" value="Lipid/polyisoprenoid-bd_YceI"/>
</dbReference>
<dbReference type="InterPro" id="IPR036761">
    <property type="entry name" value="TTHA0802/YceI-like_sf"/>
</dbReference>
<dbReference type="InterPro" id="IPR023480">
    <property type="entry name" value="UPF0312/YceI"/>
</dbReference>
<dbReference type="NCBIfam" id="NF002994">
    <property type="entry name" value="PRK03757.1"/>
    <property type="match status" value="1"/>
</dbReference>
<dbReference type="PANTHER" id="PTHR34406">
    <property type="entry name" value="PROTEIN YCEI"/>
    <property type="match status" value="1"/>
</dbReference>
<dbReference type="PANTHER" id="PTHR34406:SF1">
    <property type="entry name" value="PROTEIN YCEI"/>
    <property type="match status" value="1"/>
</dbReference>
<dbReference type="Pfam" id="PF04264">
    <property type="entry name" value="YceI"/>
    <property type="match status" value="1"/>
</dbReference>
<dbReference type="SMART" id="SM00867">
    <property type="entry name" value="YceI"/>
    <property type="match status" value="1"/>
</dbReference>
<dbReference type="SUPFAM" id="SSF101874">
    <property type="entry name" value="YceI-like"/>
    <property type="match status" value="1"/>
</dbReference>
<reference key="1">
    <citation type="submission" date="2006-12" db="EMBL/GenBank/DDBJ databases">
        <title>Complete sequence of Shewanella sp. W3-18-1.</title>
        <authorList>
            <consortium name="US DOE Joint Genome Institute"/>
            <person name="Copeland A."/>
            <person name="Lucas S."/>
            <person name="Lapidus A."/>
            <person name="Barry K."/>
            <person name="Detter J.C."/>
            <person name="Glavina del Rio T."/>
            <person name="Hammon N."/>
            <person name="Israni S."/>
            <person name="Dalin E."/>
            <person name="Tice H."/>
            <person name="Pitluck S."/>
            <person name="Chain P."/>
            <person name="Malfatti S."/>
            <person name="Shin M."/>
            <person name="Vergez L."/>
            <person name="Schmutz J."/>
            <person name="Larimer F."/>
            <person name="Land M."/>
            <person name="Hauser L."/>
            <person name="Kyrpides N."/>
            <person name="Lykidis A."/>
            <person name="Tiedje J."/>
            <person name="Richardson P."/>
        </authorList>
    </citation>
    <scope>NUCLEOTIDE SEQUENCE [LARGE SCALE GENOMIC DNA]</scope>
    <source>
        <strain>W3-18-1</strain>
    </source>
</reference>
<accession>A1RHK7</accession>
<feature type="signal peptide" evidence="1">
    <location>
        <begin position="1"/>
        <end position="22"/>
    </location>
</feature>
<feature type="chain" id="PRO_5000203872" description="UPF0312 protein Sputw3181_1309">
    <location>
        <begin position="23"/>
        <end position="191"/>
    </location>
</feature>
<organism>
    <name type="scientific">Shewanella sp. (strain W3-18-1)</name>
    <dbReference type="NCBI Taxonomy" id="351745"/>
    <lineage>
        <taxon>Bacteria</taxon>
        <taxon>Pseudomonadati</taxon>
        <taxon>Pseudomonadota</taxon>
        <taxon>Gammaproteobacteria</taxon>
        <taxon>Alteromonadales</taxon>
        <taxon>Shewanellaceae</taxon>
        <taxon>Shewanella</taxon>
    </lineage>
</organism>
<name>Y1309_SHESW</name>
<sequence>MKKQLLSALIGVSLLVPMAASAADYVIDTEGAHASITFKVNHLGYSYVVGRFNDFSGDFSYDAAKPTAMTVNVTVNTLSVDSNHAERDKHIRGEDFLNTGKFAKATFASTSVEDKGNGDLVINGNLTLNGVTKPLAIKAHAVGEGQDPWGGYRAGFTGTTTFAMKDFGIKMDLGPASSHVELDLVVEGVRK</sequence>
<comment type="subcellular location">
    <subcellularLocation>
        <location evidence="1">Periplasm</location>
    </subcellularLocation>
</comment>
<comment type="similarity">
    <text evidence="1">Belongs to the UPF0312 family. Type 1 subfamily.</text>
</comment>